<proteinExistence type="evidence at transcript level"/>
<dbReference type="EMBL" id="EF990742">
    <property type="protein sequence ID" value="ABV64396.1"/>
    <property type="molecule type" value="mRNA"/>
</dbReference>
<dbReference type="SMR" id="B5KL34"/>
<dbReference type="MEROPS" id="I02.052"/>
<dbReference type="GO" id="GO:0005615">
    <property type="term" value="C:extracellular space"/>
    <property type="evidence" value="ECO:0007669"/>
    <property type="project" value="TreeGrafter"/>
</dbReference>
<dbReference type="GO" id="GO:0004867">
    <property type="term" value="F:serine-type endopeptidase inhibitor activity"/>
    <property type="evidence" value="ECO:0007669"/>
    <property type="project" value="UniProtKB-KW"/>
</dbReference>
<dbReference type="CDD" id="cd22594">
    <property type="entry name" value="Kunitz_textilinin-like"/>
    <property type="match status" value="1"/>
</dbReference>
<dbReference type="FunFam" id="4.10.410.10:FF:000021">
    <property type="entry name" value="Serine protease inhibitor, putative"/>
    <property type="match status" value="1"/>
</dbReference>
<dbReference type="Gene3D" id="4.10.410.10">
    <property type="entry name" value="Pancreatic trypsin inhibitor Kunitz domain"/>
    <property type="match status" value="1"/>
</dbReference>
<dbReference type="InterPro" id="IPR002223">
    <property type="entry name" value="Kunitz_BPTI"/>
</dbReference>
<dbReference type="InterPro" id="IPR036880">
    <property type="entry name" value="Kunitz_BPTI_sf"/>
</dbReference>
<dbReference type="InterPro" id="IPR020901">
    <property type="entry name" value="Prtase_inh_Kunz-CS"/>
</dbReference>
<dbReference type="InterPro" id="IPR050098">
    <property type="entry name" value="TFPI/VKTCI-like"/>
</dbReference>
<dbReference type="PANTHER" id="PTHR10083:SF374">
    <property type="entry name" value="BPTI_KUNITZ INHIBITOR DOMAIN-CONTAINING PROTEIN"/>
    <property type="match status" value="1"/>
</dbReference>
<dbReference type="PANTHER" id="PTHR10083">
    <property type="entry name" value="KUNITZ-TYPE PROTEASE INHIBITOR-RELATED"/>
    <property type="match status" value="1"/>
</dbReference>
<dbReference type="Pfam" id="PF00014">
    <property type="entry name" value="Kunitz_BPTI"/>
    <property type="match status" value="1"/>
</dbReference>
<dbReference type="PRINTS" id="PR00759">
    <property type="entry name" value="BASICPTASE"/>
</dbReference>
<dbReference type="SMART" id="SM00131">
    <property type="entry name" value="KU"/>
    <property type="match status" value="1"/>
</dbReference>
<dbReference type="SUPFAM" id="SSF57362">
    <property type="entry name" value="BPTI-like"/>
    <property type="match status" value="1"/>
</dbReference>
<dbReference type="PROSITE" id="PS00280">
    <property type="entry name" value="BPTI_KUNITZ_1"/>
    <property type="match status" value="1"/>
</dbReference>
<dbReference type="PROSITE" id="PS50279">
    <property type="entry name" value="BPTI_KUNITZ_2"/>
    <property type="match status" value="1"/>
</dbReference>
<feature type="signal peptide" evidence="2">
    <location>
        <begin position="1"/>
        <end position="24"/>
    </location>
</feature>
<feature type="chain" id="PRO_5000395593" description="Kunitz-type serine protease inhibitor nigrescinin-3">
    <location>
        <begin position="25"/>
        <end position="83"/>
    </location>
</feature>
<feature type="domain" description="BPTI/Kunitz inhibitor" evidence="3">
    <location>
        <begin position="31"/>
        <end position="81"/>
    </location>
</feature>
<feature type="site" description="Reactive bond for trypsin" evidence="1">
    <location>
        <begin position="41"/>
        <end position="42"/>
    </location>
</feature>
<feature type="disulfide bond" evidence="3">
    <location>
        <begin position="31"/>
        <end position="81"/>
    </location>
</feature>
<feature type="disulfide bond" evidence="3">
    <location>
        <begin position="40"/>
        <end position="64"/>
    </location>
</feature>
<evidence type="ECO:0000250" key="1"/>
<evidence type="ECO:0000255" key="2"/>
<evidence type="ECO:0000255" key="3">
    <source>
        <dbReference type="PROSITE-ProRule" id="PRU00031"/>
    </source>
</evidence>
<evidence type="ECO:0000305" key="4"/>
<keyword id="KW-1015">Disulfide bond</keyword>
<keyword id="KW-0646">Protease inhibitor</keyword>
<keyword id="KW-0964">Secreted</keyword>
<keyword id="KW-0722">Serine protease inhibitor</keyword>
<keyword id="KW-0732">Signal</keyword>
<accession>B5KL34</accession>
<sequence length="83" mass="9245">MSSGGLLLLLGLLTLWEALTPVSSTDRPEFCELPEDSGPCKGLFHVFYYNSDQNQRLEFIYGGCYGNANNFKTIEECKRTCAA</sequence>
<organism>
    <name type="scientific">Cryptophis nigrescens</name>
    <name type="common">Eastern small-eyed snake</name>
    <name type="synonym">Rhinoplocephalus nigrescens</name>
    <dbReference type="NCBI Taxonomy" id="292442"/>
    <lineage>
        <taxon>Eukaryota</taxon>
        <taxon>Metazoa</taxon>
        <taxon>Chordata</taxon>
        <taxon>Craniata</taxon>
        <taxon>Vertebrata</taxon>
        <taxon>Euteleostomi</taxon>
        <taxon>Lepidosauria</taxon>
        <taxon>Squamata</taxon>
        <taxon>Bifurcata</taxon>
        <taxon>Unidentata</taxon>
        <taxon>Episquamata</taxon>
        <taxon>Toxicofera</taxon>
        <taxon>Serpentes</taxon>
        <taxon>Colubroidea</taxon>
        <taxon>Elapidae</taxon>
        <taxon>Hydrophiinae</taxon>
        <taxon>Cryptophis</taxon>
    </lineage>
</organism>
<comment type="function">
    <text evidence="1">Serine protease inhibitor.</text>
</comment>
<comment type="subcellular location">
    <subcellularLocation>
        <location evidence="1">Secreted</location>
    </subcellularLocation>
</comment>
<comment type="tissue specificity">
    <text>Expressed by the venom gland.</text>
</comment>
<comment type="similarity">
    <text evidence="4">Belongs to the venom Kunitz-type family.</text>
</comment>
<protein>
    <recommendedName>
        <fullName>Kunitz-type serine protease inhibitor nigrescinin-3</fullName>
    </recommendedName>
</protein>
<reference key="1">
    <citation type="submission" date="2007-06" db="EMBL/GenBank/DDBJ databases">
        <title>Identification of Kunitz-type serine protease inhibitors from the venom glands of Australian elapid snakes.</title>
        <authorList>
            <person name="St Pierre L."/>
            <person name="Earl S."/>
        </authorList>
    </citation>
    <scope>NUCLEOTIDE SEQUENCE [MRNA]</scope>
</reference>
<name>VKT3_CRYNI</name>